<feature type="chain" id="PRO_1000021249" description="Recombination-associated protein RdgC">
    <location>
        <begin position="1"/>
        <end position="303"/>
    </location>
</feature>
<keyword id="KW-0963">Cytoplasm</keyword>
<keyword id="KW-0233">DNA recombination</keyword>
<accession>Q1CLB8</accession>
<accession>C4GQF2</accession>
<dbReference type="EMBL" id="CP000305">
    <property type="protein sequence ID" value="ABG17212.1"/>
    <property type="molecule type" value="Genomic_DNA"/>
</dbReference>
<dbReference type="EMBL" id="ACNQ01000008">
    <property type="protein sequence ID" value="EEO77293.1"/>
    <property type="molecule type" value="Genomic_DNA"/>
</dbReference>
<dbReference type="RefSeq" id="WP_002208691.1">
    <property type="nucleotide sequence ID" value="NZ_ACNQ01000008.1"/>
</dbReference>
<dbReference type="SMR" id="Q1CLB8"/>
<dbReference type="GeneID" id="57975504"/>
<dbReference type="KEGG" id="ypn:YPN_0880"/>
<dbReference type="HOGENOM" id="CLU_052038_1_1_6"/>
<dbReference type="Proteomes" id="UP000008936">
    <property type="component" value="Chromosome"/>
</dbReference>
<dbReference type="GO" id="GO:0043590">
    <property type="term" value="C:bacterial nucleoid"/>
    <property type="evidence" value="ECO:0007669"/>
    <property type="project" value="TreeGrafter"/>
</dbReference>
<dbReference type="GO" id="GO:0005737">
    <property type="term" value="C:cytoplasm"/>
    <property type="evidence" value="ECO:0007669"/>
    <property type="project" value="UniProtKB-UniRule"/>
</dbReference>
<dbReference type="GO" id="GO:0003690">
    <property type="term" value="F:double-stranded DNA binding"/>
    <property type="evidence" value="ECO:0007669"/>
    <property type="project" value="TreeGrafter"/>
</dbReference>
<dbReference type="GO" id="GO:0006310">
    <property type="term" value="P:DNA recombination"/>
    <property type="evidence" value="ECO:0007669"/>
    <property type="project" value="UniProtKB-UniRule"/>
</dbReference>
<dbReference type="GO" id="GO:0000018">
    <property type="term" value="P:regulation of DNA recombination"/>
    <property type="evidence" value="ECO:0007669"/>
    <property type="project" value="TreeGrafter"/>
</dbReference>
<dbReference type="HAMAP" id="MF_00194">
    <property type="entry name" value="RdgC"/>
    <property type="match status" value="1"/>
</dbReference>
<dbReference type="InterPro" id="IPR007476">
    <property type="entry name" value="RdgC"/>
</dbReference>
<dbReference type="NCBIfam" id="NF001460">
    <property type="entry name" value="PRK00321.1-1"/>
    <property type="match status" value="1"/>
</dbReference>
<dbReference type="NCBIfam" id="NF001462">
    <property type="entry name" value="PRK00321.1-3"/>
    <property type="match status" value="1"/>
</dbReference>
<dbReference type="NCBIfam" id="NF001464">
    <property type="entry name" value="PRK00321.1-5"/>
    <property type="match status" value="1"/>
</dbReference>
<dbReference type="PANTHER" id="PTHR38103">
    <property type="entry name" value="RECOMBINATION-ASSOCIATED PROTEIN RDGC"/>
    <property type="match status" value="1"/>
</dbReference>
<dbReference type="PANTHER" id="PTHR38103:SF1">
    <property type="entry name" value="RECOMBINATION-ASSOCIATED PROTEIN RDGC"/>
    <property type="match status" value="1"/>
</dbReference>
<dbReference type="Pfam" id="PF04381">
    <property type="entry name" value="RdgC"/>
    <property type="match status" value="1"/>
</dbReference>
<sequence>MLWFKNLMVYRLSREVSLSADEMEKQLSAFSFTPCGSQDMAKTGWVSPMGSHSDALTHTVNGQIVICARKEEKILPSPVIKQELQDKIERLEGEQHRKLKKTEKDSLKDEVLHSLLPRAFSRFNQTFLWIDTVNDLIMVDAASAKRAEDTLALLRKSLGSLPVVPLTLENPIELTLTEWVRSKTLPAGFALMDEAELKAILEDGGVIRCKKQDLFSDEIAVHIEAGKLVTKLALDWQERIQLVLSDDGSLKRLKFADTLRDQNEDIDREDFAQRFDADFILMTSELAALIKNLIEALGGEAQH</sequence>
<name>RDGC_YERPN</name>
<evidence type="ECO:0000255" key="1">
    <source>
        <dbReference type="HAMAP-Rule" id="MF_00194"/>
    </source>
</evidence>
<protein>
    <recommendedName>
        <fullName evidence="1">Recombination-associated protein RdgC</fullName>
    </recommendedName>
</protein>
<proteinExistence type="inferred from homology"/>
<organism>
    <name type="scientific">Yersinia pestis bv. Antiqua (strain Nepal516)</name>
    <dbReference type="NCBI Taxonomy" id="377628"/>
    <lineage>
        <taxon>Bacteria</taxon>
        <taxon>Pseudomonadati</taxon>
        <taxon>Pseudomonadota</taxon>
        <taxon>Gammaproteobacteria</taxon>
        <taxon>Enterobacterales</taxon>
        <taxon>Yersiniaceae</taxon>
        <taxon>Yersinia</taxon>
    </lineage>
</organism>
<reference key="1">
    <citation type="journal article" date="2006" name="J. Bacteriol.">
        <title>Complete genome sequence of Yersinia pestis strains Antiqua and Nepal516: evidence of gene reduction in an emerging pathogen.</title>
        <authorList>
            <person name="Chain P.S.G."/>
            <person name="Hu P."/>
            <person name="Malfatti S.A."/>
            <person name="Radnedge L."/>
            <person name="Larimer F."/>
            <person name="Vergez L.M."/>
            <person name="Worsham P."/>
            <person name="Chu M.C."/>
            <person name="Andersen G.L."/>
        </authorList>
    </citation>
    <scope>NUCLEOTIDE SEQUENCE [LARGE SCALE GENOMIC DNA]</scope>
    <source>
        <strain>Nepal516</strain>
    </source>
</reference>
<reference key="2">
    <citation type="submission" date="2009-04" db="EMBL/GenBank/DDBJ databases">
        <title>Yersinia pestis Nepal516A whole genome shotgun sequencing project.</title>
        <authorList>
            <person name="Plunkett G. III"/>
            <person name="Anderson B.D."/>
            <person name="Baumler D.J."/>
            <person name="Burland V."/>
            <person name="Cabot E.L."/>
            <person name="Glasner J.D."/>
            <person name="Mau B."/>
            <person name="Neeno-Eckwall E."/>
            <person name="Perna N.T."/>
            <person name="Munk A.C."/>
            <person name="Tapia R."/>
            <person name="Green L.D."/>
            <person name="Rogers Y.C."/>
            <person name="Detter J.C."/>
            <person name="Bruce D.C."/>
            <person name="Brettin T.S."/>
        </authorList>
    </citation>
    <scope>NUCLEOTIDE SEQUENCE [LARGE SCALE GENOMIC DNA]</scope>
    <source>
        <strain>Nepal516</strain>
    </source>
</reference>
<gene>
    <name evidence="1" type="primary">rdgC</name>
    <name type="ordered locus">YPN_0880</name>
    <name type="ORF">YP516_0952</name>
</gene>
<comment type="function">
    <text evidence="1">May be involved in recombination.</text>
</comment>
<comment type="subcellular location">
    <subcellularLocation>
        <location evidence="1">Cytoplasm</location>
        <location evidence="1">Nucleoid</location>
    </subcellularLocation>
</comment>
<comment type="similarity">
    <text evidence="1">Belongs to the RdgC family.</text>
</comment>